<accession>Q8XBJ4</accession>
<evidence type="ECO:0000250" key="1"/>
<evidence type="ECO:0000305" key="2"/>
<organism>
    <name type="scientific">Escherichia coli O157:H7</name>
    <dbReference type="NCBI Taxonomy" id="83334"/>
    <lineage>
        <taxon>Bacteria</taxon>
        <taxon>Pseudomonadati</taxon>
        <taxon>Pseudomonadota</taxon>
        <taxon>Gammaproteobacteria</taxon>
        <taxon>Enterobacterales</taxon>
        <taxon>Enterobacteriaceae</taxon>
        <taxon>Escherichia</taxon>
    </lineage>
</organism>
<sequence>MGKLTGKTALITGALQGIGEGIARTFARHGANLILLDISPEIEKLADELCGRGHRCTAVVADVRDPASVAAAIKRAKEKEGRIDILVNNAGVCRLGSFLDMSDDDRDFHIDINIKGVWNVTKAVLPEMIARKDGRIVMMSSVTGDMVADPGETAYALTKAAIVGLTKSLAVEYAQSGIRVNAICPGYVRTPMAESIARQSNPEDPESVLTEMAKAIPLRRLADPLEVGELAAFLASDESSYLTGTQNVIDGGSTLPETVSVGI</sequence>
<proteinExistence type="inferred from homology"/>
<feature type="chain" id="PRO_0000054802" description="Oxidoreductase UcpA">
    <location>
        <begin position="1"/>
        <end position="263"/>
    </location>
</feature>
<feature type="active site" description="Proton acceptor" evidence="1">
    <location>
        <position position="155"/>
    </location>
</feature>
<feature type="binding site" evidence="1">
    <location>
        <begin position="10"/>
        <end position="32"/>
    </location>
    <ligand>
        <name>NAD(+)</name>
        <dbReference type="ChEBI" id="CHEBI:57540"/>
    </ligand>
</feature>
<feature type="binding site" evidence="1">
    <location>
        <position position="141"/>
    </location>
    <ligand>
        <name>substrate</name>
    </ligand>
</feature>
<name>UCPA_ECO57</name>
<comment type="similarity">
    <text evidence="2">Belongs to the short-chain dehydrogenases/reductases (SDR) family.</text>
</comment>
<comment type="sequence caution" evidence="2">
    <conflict type="erroneous initiation">
        <sequence resource="EMBL-CDS" id="AAG57544"/>
    </conflict>
    <text>Extended N-terminus.</text>
</comment>
<keyword id="KW-0560">Oxidoreductase</keyword>
<keyword id="KW-1185">Reference proteome</keyword>
<dbReference type="EC" id="1.-.-.-"/>
<dbReference type="EMBL" id="AE005174">
    <property type="protein sequence ID" value="AAG57544.1"/>
    <property type="status" value="ALT_INIT"/>
    <property type="molecule type" value="Genomic_DNA"/>
</dbReference>
<dbReference type="EMBL" id="BA000007">
    <property type="protein sequence ID" value="BAB36720.2"/>
    <property type="molecule type" value="Genomic_DNA"/>
</dbReference>
<dbReference type="PIR" id="A91041">
    <property type="entry name" value="A91041"/>
</dbReference>
<dbReference type="PIR" id="D85885">
    <property type="entry name" value="D85885"/>
</dbReference>
<dbReference type="RefSeq" id="NP_311324.2">
    <property type="nucleotide sequence ID" value="NC_002695.1"/>
</dbReference>
<dbReference type="RefSeq" id="WP_000517430.1">
    <property type="nucleotide sequence ID" value="NZ_VOAI01000001.1"/>
</dbReference>
<dbReference type="SMR" id="Q8XBJ4"/>
<dbReference type="STRING" id="155864.Z3691"/>
<dbReference type="GeneID" id="915487"/>
<dbReference type="GeneID" id="93774705"/>
<dbReference type="KEGG" id="ece:Z3691"/>
<dbReference type="KEGG" id="ecs:ECs_3297"/>
<dbReference type="PATRIC" id="fig|386585.9.peg.3444"/>
<dbReference type="eggNOG" id="COG1028">
    <property type="taxonomic scope" value="Bacteria"/>
</dbReference>
<dbReference type="HOGENOM" id="CLU_010194_1_0_6"/>
<dbReference type="OMA" id="YMTGTDF"/>
<dbReference type="Proteomes" id="UP000000558">
    <property type="component" value="Chromosome"/>
</dbReference>
<dbReference type="Proteomes" id="UP000002519">
    <property type="component" value="Chromosome"/>
</dbReference>
<dbReference type="GO" id="GO:0016616">
    <property type="term" value="F:oxidoreductase activity, acting on the CH-OH group of donors, NAD or NADP as acceptor"/>
    <property type="evidence" value="ECO:0007669"/>
    <property type="project" value="TreeGrafter"/>
</dbReference>
<dbReference type="CDD" id="cd05368">
    <property type="entry name" value="DHRS6_like_SDR_c"/>
    <property type="match status" value="1"/>
</dbReference>
<dbReference type="FunFam" id="3.40.50.720:FF:000084">
    <property type="entry name" value="Short-chain dehydrogenase reductase"/>
    <property type="match status" value="1"/>
</dbReference>
<dbReference type="Gene3D" id="3.40.50.720">
    <property type="entry name" value="NAD(P)-binding Rossmann-like Domain"/>
    <property type="match status" value="1"/>
</dbReference>
<dbReference type="InterPro" id="IPR036291">
    <property type="entry name" value="NAD(P)-bd_dom_sf"/>
</dbReference>
<dbReference type="InterPro" id="IPR002347">
    <property type="entry name" value="SDR_fam"/>
</dbReference>
<dbReference type="NCBIfam" id="NF005559">
    <property type="entry name" value="PRK07231.1"/>
    <property type="match status" value="1"/>
</dbReference>
<dbReference type="NCBIfam" id="NF006080">
    <property type="entry name" value="PRK08226.1"/>
    <property type="match status" value="1"/>
</dbReference>
<dbReference type="PANTHER" id="PTHR42760:SF133">
    <property type="entry name" value="3-OXOACYL-[ACYL-CARRIER-PROTEIN] REDUCTASE"/>
    <property type="match status" value="1"/>
</dbReference>
<dbReference type="PANTHER" id="PTHR42760">
    <property type="entry name" value="SHORT-CHAIN DEHYDROGENASES/REDUCTASES FAMILY MEMBER"/>
    <property type="match status" value="1"/>
</dbReference>
<dbReference type="Pfam" id="PF13561">
    <property type="entry name" value="adh_short_C2"/>
    <property type="match status" value="1"/>
</dbReference>
<dbReference type="PRINTS" id="PR00081">
    <property type="entry name" value="GDHRDH"/>
</dbReference>
<dbReference type="PRINTS" id="PR00080">
    <property type="entry name" value="SDRFAMILY"/>
</dbReference>
<dbReference type="SMART" id="SM00822">
    <property type="entry name" value="PKS_KR"/>
    <property type="match status" value="1"/>
</dbReference>
<dbReference type="SUPFAM" id="SSF51735">
    <property type="entry name" value="NAD(P)-binding Rossmann-fold domains"/>
    <property type="match status" value="1"/>
</dbReference>
<reference key="1">
    <citation type="journal article" date="2001" name="Nature">
        <title>Genome sequence of enterohaemorrhagic Escherichia coli O157:H7.</title>
        <authorList>
            <person name="Perna N.T."/>
            <person name="Plunkett G. III"/>
            <person name="Burland V."/>
            <person name="Mau B."/>
            <person name="Glasner J.D."/>
            <person name="Rose D.J."/>
            <person name="Mayhew G.F."/>
            <person name="Evans P.S."/>
            <person name="Gregor J."/>
            <person name="Kirkpatrick H.A."/>
            <person name="Posfai G."/>
            <person name="Hackett J."/>
            <person name="Klink S."/>
            <person name="Boutin A."/>
            <person name="Shao Y."/>
            <person name="Miller L."/>
            <person name="Grotbeck E.J."/>
            <person name="Davis N.W."/>
            <person name="Lim A."/>
            <person name="Dimalanta E.T."/>
            <person name="Potamousis K."/>
            <person name="Apodaca J."/>
            <person name="Anantharaman T.S."/>
            <person name="Lin J."/>
            <person name="Yen G."/>
            <person name="Schwartz D.C."/>
            <person name="Welch R.A."/>
            <person name="Blattner F.R."/>
        </authorList>
    </citation>
    <scope>NUCLEOTIDE SEQUENCE [LARGE SCALE GENOMIC DNA]</scope>
    <source>
        <strain>O157:H7 / EDL933 / ATCC 700927 / EHEC</strain>
    </source>
</reference>
<reference key="2">
    <citation type="journal article" date="2001" name="DNA Res.">
        <title>Complete genome sequence of enterohemorrhagic Escherichia coli O157:H7 and genomic comparison with a laboratory strain K-12.</title>
        <authorList>
            <person name="Hayashi T."/>
            <person name="Makino K."/>
            <person name="Ohnishi M."/>
            <person name="Kurokawa K."/>
            <person name="Ishii K."/>
            <person name="Yokoyama K."/>
            <person name="Han C.-G."/>
            <person name="Ohtsubo E."/>
            <person name="Nakayama K."/>
            <person name="Murata T."/>
            <person name="Tanaka M."/>
            <person name="Tobe T."/>
            <person name="Iida T."/>
            <person name="Takami H."/>
            <person name="Honda T."/>
            <person name="Sasakawa C."/>
            <person name="Ogasawara N."/>
            <person name="Yasunaga T."/>
            <person name="Kuhara S."/>
            <person name="Shiba T."/>
            <person name="Hattori M."/>
            <person name="Shinagawa H."/>
        </authorList>
    </citation>
    <scope>NUCLEOTIDE SEQUENCE [LARGE SCALE GENOMIC DNA]</scope>
    <source>
        <strain>O157:H7 / Sakai / RIMD 0509952 / EHEC</strain>
    </source>
</reference>
<protein>
    <recommendedName>
        <fullName>Oxidoreductase UcpA</fullName>
        <ecNumber>1.-.-.-</ecNumber>
    </recommendedName>
</protein>
<gene>
    <name type="primary">ucpA</name>
    <name type="ordered locus">Z3691</name>
    <name type="ordered locus">ECs3297</name>
</gene>